<evidence type="ECO:0000255" key="1"/>
<evidence type="ECO:0000256" key="2">
    <source>
        <dbReference type="SAM" id="MobiDB-lite"/>
    </source>
</evidence>
<evidence type="ECO:0000269" key="3">
    <source>
    </source>
</evidence>
<evidence type="ECO:0000269" key="4">
    <source ref="3"/>
</evidence>
<evidence type="ECO:0000305" key="5"/>
<proteinExistence type="evidence at protein level"/>
<sequence length="194" mass="20484">MEDGLLEIMTKDGGDMPAPLEVSTVPAVGDVISGEYNGGMKELMEHLKAQLQALFEDVRAMRGALDEQASHIQVLSDDVCANQRAIVSMCQIMTTAPRQGGLGVVGGKGSFQSDPQEPETPSPGIGDSGLLGRDPEDEEEEEEEKEMPSPATPSSHCERPESPCAGLLGGDGPLVEPLDMPDITLLQLEGEASL</sequence>
<comment type="interaction">
    <interactant intactId="EBI-10179526">
        <id>Q52MB2</id>
    </interactant>
    <interactant intactId="EBI-11954519">
        <id>Q49AR9</id>
        <label>ANKS1A</label>
    </interactant>
    <organismsDiffer>false</organismsDiffer>
    <experiments>3</experiments>
</comment>
<comment type="interaction">
    <interactant intactId="EBI-10179526">
        <id>Q52MB2</id>
    </interactant>
    <interactant intactId="EBI-751540">
        <id>O95872</id>
        <label>GPANK1</label>
    </interactant>
    <organismsDiffer>false</organismsDiffer>
    <experiments>6</experiments>
</comment>
<comment type="interaction">
    <interactant intactId="EBI-10179526">
        <id>Q52MB2</id>
    </interactant>
    <interactant intactId="EBI-17178971">
        <id>Q14005-2</id>
        <label>IL16</label>
    </interactant>
    <organismsDiffer>false</organismsDiffer>
    <experiments>3</experiments>
</comment>
<comment type="interaction">
    <interactant intactId="EBI-10179526">
        <id>Q52MB2</id>
    </interactant>
    <interactant intactId="EBI-741158">
        <id>Q96HA8</id>
        <label>NTAQ1</label>
    </interactant>
    <organismsDiffer>false</organismsDiffer>
    <experiments>3</experiments>
</comment>
<comment type="interaction">
    <interactant intactId="EBI-10179526">
        <id>Q52MB2</id>
    </interactant>
    <interactant intactId="EBI-750589">
        <id>P30039</id>
        <label>PBLD</label>
    </interactant>
    <organismsDiffer>false</organismsDiffer>
    <experiments>6</experiments>
</comment>
<comment type="interaction">
    <interactant intactId="EBI-10179526">
        <id>Q52MB2</id>
    </interactant>
    <interactant intactId="EBI-714158">
        <id>Q13526</id>
        <label>PIN1</label>
    </interactant>
    <organismsDiffer>false</organismsDiffer>
    <experiments>6</experiments>
</comment>
<comment type="interaction">
    <interactant intactId="EBI-10179526">
        <id>Q52MB2</id>
    </interactant>
    <interactant intactId="EBI-1105153">
        <id>Q96KQ4</id>
        <label>PPP1R13B</label>
    </interactant>
    <organismsDiffer>false</organismsDiffer>
    <experiments>3</experiments>
</comment>
<comment type="interaction">
    <interactant intactId="EBI-10179526">
        <id>Q52MB2</id>
    </interactant>
    <interactant intactId="EBI-358122">
        <id>P32969</id>
        <label>RPL9P9</label>
    </interactant>
    <organismsDiffer>false</organismsDiffer>
    <experiments>6</experiments>
</comment>
<comment type="interaction">
    <interactant intactId="EBI-10179526">
        <id>Q52MB2</id>
    </interactant>
    <interactant intactId="EBI-714135">
        <id>O75558</id>
        <label>STX11</label>
    </interactant>
    <organismsDiffer>false</organismsDiffer>
    <experiments>6</experiments>
</comment>
<comment type="interaction">
    <interactant intactId="EBI-10179526">
        <id>Q52MB2</id>
    </interactant>
    <interactant intactId="EBI-357631">
        <id>Q13114</id>
        <label>TRAF3</label>
    </interactant>
    <organismsDiffer>false</organismsDiffer>
    <experiments>3</experiments>
</comment>
<comment type="interaction">
    <interactant intactId="EBI-10179526">
        <id>Q52MB2</id>
    </interactant>
    <interactant intactId="EBI-523498">
        <id>O00463</id>
        <label>TRAF5</label>
    </interactant>
    <organismsDiffer>false</organismsDiffer>
    <experiments>6</experiments>
</comment>
<keyword id="KW-0175">Coiled coil</keyword>
<keyword id="KW-1267">Proteomics identification</keyword>
<keyword id="KW-1185">Reference proteome</keyword>
<organism>
    <name type="scientific">Homo sapiens</name>
    <name type="common">Human</name>
    <dbReference type="NCBI Taxonomy" id="9606"/>
    <lineage>
        <taxon>Eukaryota</taxon>
        <taxon>Metazoa</taxon>
        <taxon>Chordata</taxon>
        <taxon>Craniata</taxon>
        <taxon>Vertebrata</taxon>
        <taxon>Euteleostomi</taxon>
        <taxon>Mammalia</taxon>
        <taxon>Eutheria</taxon>
        <taxon>Euarchontoglires</taxon>
        <taxon>Primates</taxon>
        <taxon>Haplorrhini</taxon>
        <taxon>Catarrhini</taxon>
        <taxon>Hominidae</taxon>
        <taxon>Homo</taxon>
    </lineage>
</organism>
<gene>
    <name type="primary">CCDC184</name>
    <name type="synonym">C12orf68</name>
</gene>
<reference key="1">
    <citation type="journal article" date="2004" name="Nat. Genet.">
        <title>Complete sequencing and characterization of 21,243 full-length human cDNAs.</title>
        <authorList>
            <person name="Ota T."/>
            <person name="Suzuki Y."/>
            <person name="Nishikawa T."/>
            <person name="Otsuki T."/>
            <person name="Sugiyama T."/>
            <person name="Irie R."/>
            <person name="Wakamatsu A."/>
            <person name="Hayashi K."/>
            <person name="Sato H."/>
            <person name="Nagai K."/>
            <person name="Kimura K."/>
            <person name="Makita H."/>
            <person name="Sekine M."/>
            <person name="Obayashi M."/>
            <person name="Nishi T."/>
            <person name="Shibahara T."/>
            <person name="Tanaka T."/>
            <person name="Ishii S."/>
            <person name="Yamamoto J."/>
            <person name="Saito K."/>
            <person name="Kawai Y."/>
            <person name="Isono Y."/>
            <person name="Nakamura Y."/>
            <person name="Nagahari K."/>
            <person name="Murakami K."/>
            <person name="Yasuda T."/>
            <person name="Iwayanagi T."/>
            <person name="Wagatsuma M."/>
            <person name="Shiratori A."/>
            <person name="Sudo H."/>
            <person name="Hosoiri T."/>
            <person name="Kaku Y."/>
            <person name="Kodaira H."/>
            <person name="Kondo H."/>
            <person name="Sugawara M."/>
            <person name="Takahashi M."/>
            <person name="Kanda K."/>
            <person name="Yokoi T."/>
            <person name="Furuya T."/>
            <person name="Kikkawa E."/>
            <person name="Omura Y."/>
            <person name="Abe K."/>
            <person name="Kamihara K."/>
            <person name="Katsuta N."/>
            <person name="Sato K."/>
            <person name="Tanikawa M."/>
            <person name="Yamazaki M."/>
            <person name="Ninomiya K."/>
            <person name="Ishibashi T."/>
            <person name="Yamashita H."/>
            <person name="Murakawa K."/>
            <person name="Fujimori K."/>
            <person name="Tanai H."/>
            <person name="Kimata M."/>
            <person name="Watanabe M."/>
            <person name="Hiraoka S."/>
            <person name="Chiba Y."/>
            <person name="Ishida S."/>
            <person name="Ono Y."/>
            <person name="Takiguchi S."/>
            <person name="Watanabe S."/>
            <person name="Yosida M."/>
            <person name="Hotuta T."/>
            <person name="Kusano J."/>
            <person name="Kanehori K."/>
            <person name="Takahashi-Fujii A."/>
            <person name="Hara H."/>
            <person name="Tanase T.-O."/>
            <person name="Nomura Y."/>
            <person name="Togiya S."/>
            <person name="Komai F."/>
            <person name="Hara R."/>
            <person name="Takeuchi K."/>
            <person name="Arita M."/>
            <person name="Imose N."/>
            <person name="Musashino K."/>
            <person name="Yuuki H."/>
            <person name="Oshima A."/>
            <person name="Sasaki N."/>
            <person name="Aotsuka S."/>
            <person name="Yoshikawa Y."/>
            <person name="Matsunawa H."/>
            <person name="Ichihara T."/>
            <person name="Shiohata N."/>
            <person name="Sano S."/>
            <person name="Moriya S."/>
            <person name="Momiyama H."/>
            <person name="Satoh N."/>
            <person name="Takami S."/>
            <person name="Terashima Y."/>
            <person name="Suzuki O."/>
            <person name="Nakagawa S."/>
            <person name="Senoh A."/>
            <person name="Mizoguchi H."/>
            <person name="Goto Y."/>
            <person name="Shimizu F."/>
            <person name="Wakebe H."/>
            <person name="Hishigaki H."/>
            <person name="Watanabe T."/>
            <person name="Sugiyama A."/>
            <person name="Takemoto M."/>
            <person name="Kawakami B."/>
            <person name="Yamazaki M."/>
            <person name="Watanabe K."/>
            <person name="Kumagai A."/>
            <person name="Itakura S."/>
            <person name="Fukuzumi Y."/>
            <person name="Fujimori Y."/>
            <person name="Komiyama M."/>
            <person name="Tashiro H."/>
            <person name="Tanigami A."/>
            <person name="Fujiwara T."/>
            <person name="Ono T."/>
            <person name="Yamada K."/>
            <person name="Fujii Y."/>
            <person name="Ozaki K."/>
            <person name="Hirao M."/>
            <person name="Ohmori Y."/>
            <person name="Kawabata A."/>
            <person name="Hikiji T."/>
            <person name="Kobatake N."/>
            <person name="Inagaki H."/>
            <person name="Ikema Y."/>
            <person name="Okamoto S."/>
            <person name="Okitani R."/>
            <person name="Kawakami T."/>
            <person name="Noguchi S."/>
            <person name="Itoh T."/>
            <person name="Shigeta K."/>
            <person name="Senba T."/>
            <person name="Matsumura K."/>
            <person name="Nakajima Y."/>
            <person name="Mizuno T."/>
            <person name="Morinaga M."/>
            <person name="Sasaki M."/>
            <person name="Togashi T."/>
            <person name="Oyama M."/>
            <person name="Hata H."/>
            <person name="Watanabe M."/>
            <person name="Komatsu T."/>
            <person name="Mizushima-Sugano J."/>
            <person name="Satoh T."/>
            <person name="Shirai Y."/>
            <person name="Takahashi Y."/>
            <person name="Nakagawa K."/>
            <person name="Okumura K."/>
            <person name="Nagase T."/>
            <person name="Nomura N."/>
            <person name="Kikuchi H."/>
            <person name="Masuho Y."/>
            <person name="Yamashita R."/>
            <person name="Nakai K."/>
            <person name="Yada T."/>
            <person name="Nakamura Y."/>
            <person name="Ohara O."/>
            <person name="Isogai T."/>
            <person name="Sugano S."/>
        </authorList>
    </citation>
    <scope>NUCLEOTIDE SEQUENCE [LARGE SCALE MRNA]</scope>
    <source>
        <tissue>Placenta</tissue>
    </source>
</reference>
<reference key="2">
    <citation type="journal article" date="2006" name="Nature">
        <title>The finished DNA sequence of human chromosome 12.</title>
        <authorList>
            <person name="Scherer S.E."/>
            <person name="Muzny D.M."/>
            <person name="Buhay C.J."/>
            <person name="Chen R."/>
            <person name="Cree A."/>
            <person name="Ding Y."/>
            <person name="Dugan-Rocha S."/>
            <person name="Gill R."/>
            <person name="Gunaratne P."/>
            <person name="Harris R.A."/>
            <person name="Hawes A.C."/>
            <person name="Hernandez J."/>
            <person name="Hodgson A.V."/>
            <person name="Hume J."/>
            <person name="Jackson A."/>
            <person name="Khan Z.M."/>
            <person name="Kovar-Smith C."/>
            <person name="Lewis L.R."/>
            <person name="Lozado R.J."/>
            <person name="Metzker M.L."/>
            <person name="Milosavljevic A."/>
            <person name="Miner G.R."/>
            <person name="Montgomery K.T."/>
            <person name="Morgan M.B."/>
            <person name="Nazareth L.V."/>
            <person name="Scott G."/>
            <person name="Sodergren E."/>
            <person name="Song X.-Z."/>
            <person name="Steffen D."/>
            <person name="Lovering R.C."/>
            <person name="Wheeler D.A."/>
            <person name="Worley K.C."/>
            <person name="Yuan Y."/>
            <person name="Zhang Z."/>
            <person name="Adams C.Q."/>
            <person name="Ansari-Lari M.A."/>
            <person name="Ayele M."/>
            <person name="Brown M.J."/>
            <person name="Chen G."/>
            <person name="Chen Z."/>
            <person name="Clerc-Blankenburg K.P."/>
            <person name="Davis C."/>
            <person name="Delgado O."/>
            <person name="Dinh H.H."/>
            <person name="Draper H."/>
            <person name="Gonzalez-Garay M.L."/>
            <person name="Havlak P."/>
            <person name="Jackson L.R."/>
            <person name="Jacob L.S."/>
            <person name="Kelly S.H."/>
            <person name="Li L."/>
            <person name="Li Z."/>
            <person name="Liu J."/>
            <person name="Liu W."/>
            <person name="Lu J."/>
            <person name="Maheshwari M."/>
            <person name="Nguyen B.-V."/>
            <person name="Okwuonu G.O."/>
            <person name="Pasternak S."/>
            <person name="Perez L.M."/>
            <person name="Plopper F.J.H."/>
            <person name="Santibanez J."/>
            <person name="Shen H."/>
            <person name="Tabor P.E."/>
            <person name="Verduzco D."/>
            <person name="Waldron L."/>
            <person name="Wang Q."/>
            <person name="Williams G.A."/>
            <person name="Zhang J."/>
            <person name="Zhou J."/>
            <person name="Allen C.C."/>
            <person name="Amin A.G."/>
            <person name="Anyalebechi V."/>
            <person name="Bailey M."/>
            <person name="Barbaria J.A."/>
            <person name="Bimage K.E."/>
            <person name="Bryant N.P."/>
            <person name="Burch P.E."/>
            <person name="Burkett C.E."/>
            <person name="Burrell K.L."/>
            <person name="Calderon E."/>
            <person name="Cardenas V."/>
            <person name="Carter K."/>
            <person name="Casias K."/>
            <person name="Cavazos I."/>
            <person name="Cavazos S.R."/>
            <person name="Ceasar H."/>
            <person name="Chacko J."/>
            <person name="Chan S.N."/>
            <person name="Chavez D."/>
            <person name="Christopoulos C."/>
            <person name="Chu J."/>
            <person name="Cockrell R."/>
            <person name="Cox C.D."/>
            <person name="Dang M."/>
            <person name="Dathorne S.R."/>
            <person name="David R."/>
            <person name="Davis C.M."/>
            <person name="Davy-Carroll L."/>
            <person name="Deshazo D.R."/>
            <person name="Donlin J.E."/>
            <person name="D'Souza L."/>
            <person name="Eaves K.A."/>
            <person name="Egan A."/>
            <person name="Emery-Cohen A.J."/>
            <person name="Escotto M."/>
            <person name="Flagg N."/>
            <person name="Forbes L.D."/>
            <person name="Gabisi A.M."/>
            <person name="Garza M."/>
            <person name="Hamilton C."/>
            <person name="Henderson N."/>
            <person name="Hernandez O."/>
            <person name="Hines S."/>
            <person name="Hogues M.E."/>
            <person name="Huang M."/>
            <person name="Idlebird D.G."/>
            <person name="Johnson R."/>
            <person name="Jolivet A."/>
            <person name="Jones S."/>
            <person name="Kagan R."/>
            <person name="King L.M."/>
            <person name="Leal B."/>
            <person name="Lebow H."/>
            <person name="Lee S."/>
            <person name="LeVan J.M."/>
            <person name="Lewis L.C."/>
            <person name="London P."/>
            <person name="Lorensuhewa L.M."/>
            <person name="Loulseged H."/>
            <person name="Lovett D.A."/>
            <person name="Lucier A."/>
            <person name="Lucier R.L."/>
            <person name="Ma J."/>
            <person name="Madu R.C."/>
            <person name="Mapua P."/>
            <person name="Martindale A.D."/>
            <person name="Martinez E."/>
            <person name="Massey E."/>
            <person name="Mawhiney S."/>
            <person name="Meador M.G."/>
            <person name="Mendez S."/>
            <person name="Mercado C."/>
            <person name="Mercado I.C."/>
            <person name="Merritt C.E."/>
            <person name="Miner Z.L."/>
            <person name="Minja E."/>
            <person name="Mitchell T."/>
            <person name="Mohabbat F."/>
            <person name="Mohabbat K."/>
            <person name="Montgomery B."/>
            <person name="Moore N."/>
            <person name="Morris S."/>
            <person name="Munidasa M."/>
            <person name="Ngo R.N."/>
            <person name="Nguyen N.B."/>
            <person name="Nickerson E."/>
            <person name="Nwaokelemeh O.O."/>
            <person name="Nwokenkwo S."/>
            <person name="Obregon M."/>
            <person name="Oguh M."/>
            <person name="Oragunye N."/>
            <person name="Oviedo R.J."/>
            <person name="Parish B.J."/>
            <person name="Parker D.N."/>
            <person name="Parrish J."/>
            <person name="Parks K.L."/>
            <person name="Paul H.A."/>
            <person name="Payton B.A."/>
            <person name="Perez A."/>
            <person name="Perrin W."/>
            <person name="Pickens A."/>
            <person name="Primus E.L."/>
            <person name="Pu L.-L."/>
            <person name="Puazo M."/>
            <person name="Quiles M.M."/>
            <person name="Quiroz J.B."/>
            <person name="Rabata D."/>
            <person name="Reeves K."/>
            <person name="Ruiz S.J."/>
            <person name="Shao H."/>
            <person name="Sisson I."/>
            <person name="Sonaike T."/>
            <person name="Sorelle R.P."/>
            <person name="Sutton A.E."/>
            <person name="Svatek A.F."/>
            <person name="Svetz L.A."/>
            <person name="Tamerisa K.S."/>
            <person name="Taylor T.R."/>
            <person name="Teague B."/>
            <person name="Thomas N."/>
            <person name="Thorn R.D."/>
            <person name="Trejos Z.Y."/>
            <person name="Trevino B.K."/>
            <person name="Ukegbu O.N."/>
            <person name="Urban J.B."/>
            <person name="Vasquez L.I."/>
            <person name="Vera V.A."/>
            <person name="Villasana D.M."/>
            <person name="Wang L."/>
            <person name="Ward-Moore S."/>
            <person name="Warren J.T."/>
            <person name="Wei X."/>
            <person name="White F."/>
            <person name="Williamson A.L."/>
            <person name="Wleczyk R."/>
            <person name="Wooden H.S."/>
            <person name="Wooden S.H."/>
            <person name="Yen J."/>
            <person name="Yoon L."/>
            <person name="Yoon V."/>
            <person name="Zorrilla S.E."/>
            <person name="Nelson D."/>
            <person name="Kucherlapati R."/>
            <person name="Weinstock G."/>
            <person name="Gibbs R.A."/>
        </authorList>
    </citation>
    <scope>NUCLEOTIDE SEQUENCE [LARGE SCALE GENOMIC DNA]</scope>
</reference>
<reference key="3">
    <citation type="submission" date="2005-07" db="EMBL/GenBank/DDBJ databases">
        <authorList>
            <person name="Mural R.J."/>
            <person name="Istrail S."/>
            <person name="Sutton G.G."/>
            <person name="Florea L."/>
            <person name="Halpern A.L."/>
            <person name="Mobarry C.M."/>
            <person name="Lippert R."/>
            <person name="Walenz B."/>
            <person name="Shatkay H."/>
            <person name="Dew I."/>
            <person name="Miller J.R."/>
            <person name="Flanigan M.J."/>
            <person name="Edwards N.J."/>
            <person name="Bolanos R."/>
            <person name="Fasulo D."/>
            <person name="Halldorsson B.V."/>
            <person name="Hannenhalli S."/>
            <person name="Turner R."/>
            <person name="Yooseph S."/>
            <person name="Lu F."/>
            <person name="Nusskern D.R."/>
            <person name="Shue B.C."/>
            <person name="Zheng X.H."/>
            <person name="Zhong F."/>
            <person name="Delcher A.L."/>
            <person name="Huson D.H."/>
            <person name="Kravitz S.A."/>
            <person name="Mouchard L."/>
            <person name="Reinert K."/>
            <person name="Remington K.A."/>
            <person name="Clark A.G."/>
            <person name="Waterman M.S."/>
            <person name="Eichler E.E."/>
            <person name="Adams M.D."/>
            <person name="Hunkapiller M.W."/>
            <person name="Myers E.W."/>
            <person name="Venter J.C."/>
        </authorList>
    </citation>
    <scope>NUCLEOTIDE SEQUENCE [LARGE SCALE GENOMIC DNA]</scope>
    <scope>VARIANT ASP-140</scope>
</reference>
<reference key="4">
    <citation type="journal article" date="2004" name="Genome Res.">
        <title>The status, quality, and expansion of the NIH full-length cDNA project: the Mammalian Gene Collection (MGC).</title>
        <authorList>
            <consortium name="The MGC Project Team"/>
        </authorList>
    </citation>
    <scope>NUCLEOTIDE SEQUENCE [LARGE SCALE MRNA]</scope>
    <scope>VARIANT ASP-140</scope>
    <source>
        <tissue>Brain</tissue>
    </source>
</reference>
<name>CC184_HUMAN</name>
<accession>Q52MB2</accession>
<accession>Q96MK5</accession>
<accession>Q96N39</accession>
<protein>
    <recommendedName>
        <fullName>Coiled-coil domain-containing protein 184</fullName>
    </recommendedName>
</protein>
<feature type="chain" id="PRO_0000335681" description="Coiled-coil domain-containing protein 184">
    <location>
        <begin position="1"/>
        <end position="194"/>
    </location>
</feature>
<feature type="region of interest" description="Disordered" evidence="2">
    <location>
        <begin position="101"/>
        <end position="176"/>
    </location>
</feature>
<feature type="coiled-coil region" evidence="1">
    <location>
        <begin position="39"/>
        <end position="68"/>
    </location>
</feature>
<feature type="compositionally biased region" description="Acidic residues" evidence="2">
    <location>
        <begin position="135"/>
        <end position="145"/>
    </location>
</feature>
<feature type="sequence variant" id="VAR_060278" description="In dbSNP:rs10783231." evidence="3 4">
    <original>E</original>
    <variation>D</variation>
    <location>
        <position position="140"/>
    </location>
</feature>
<feature type="sequence conflict" description="In Ref. 1; BAB71071." evidence="5" ref="1">
    <original>D</original>
    <variation>G</variation>
    <location>
        <position position="78"/>
    </location>
</feature>
<dbReference type="EMBL" id="AK056003">
    <property type="protein sequence ID" value="BAB71071.1"/>
    <property type="molecule type" value="mRNA"/>
</dbReference>
<dbReference type="EMBL" id="AK056783">
    <property type="protein sequence ID" value="BAB71283.1"/>
    <property type="molecule type" value="mRNA"/>
</dbReference>
<dbReference type="EMBL" id="AC074029">
    <property type="status" value="NOT_ANNOTATED_CDS"/>
    <property type="molecule type" value="Genomic_DNA"/>
</dbReference>
<dbReference type="EMBL" id="CH471111">
    <property type="protein sequence ID" value="EAW57977.1"/>
    <property type="molecule type" value="Genomic_DNA"/>
</dbReference>
<dbReference type="EMBL" id="BC036801">
    <property type="protein sequence ID" value="AAH36801.1"/>
    <property type="molecule type" value="mRNA"/>
</dbReference>
<dbReference type="CCDS" id="CCDS31785.1"/>
<dbReference type="RefSeq" id="NP_001013657.3">
    <property type="nucleotide sequence ID" value="NM_001013635.4"/>
</dbReference>
<dbReference type="BioGRID" id="132471">
    <property type="interactions" value="13"/>
</dbReference>
<dbReference type="FunCoup" id="Q52MB2">
    <property type="interactions" value="282"/>
</dbReference>
<dbReference type="IntAct" id="Q52MB2">
    <property type="interactions" value="13"/>
</dbReference>
<dbReference type="MINT" id="Q52MB2"/>
<dbReference type="STRING" id="9606.ENSP00000320849"/>
<dbReference type="GlyGen" id="Q52MB2">
    <property type="glycosylation" value="1 site"/>
</dbReference>
<dbReference type="iPTMnet" id="Q52MB2"/>
<dbReference type="PhosphoSitePlus" id="Q52MB2"/>
<dbReference type="BioMuta" id="CCDC184"/>
<dbReference type="DMDM" id="296434453"/>
<dbReference type="jPOST" id="Q52MB2"/>
<dbReference type="MassIVE" id="Q52MB2"/>
<dbReference type="PaxDb" id="9606-ENSP00000320849"/>
<dbReference type="PeptideAtlas" id="Q52MB2"/>
<dbReference type="Antibodypedia" id="25636">
    <property type="antibodies" value="65 antibodies from 14 providers"/>
</dbReference>
<dbReference type="DNASU" id="387856"/>
<dbReference type="Ensembl" id="ENST00000316554.5">
    <property type="protein sequence ID" value="ENSP00000320849.3"/>
    <property type="gene ID" value="ENSG00000177875.5"/>
</dbReference>
<dbReference type="GeneID" id="387856"/>
<dbReference type="KEGG" id="hsa:387856"/>
<dbReference type="MANE-Select" id="ENST00000316554.5">
    <property type="protein sequence ID" value="ENSP00000320849.3"/>
    <property type="RefSeq nucleotide sequence ID" value="NM_001013635.4"/>
    <property type="RefSeq protein sequence ID" value="NP_001013657.3"/>
</dbReference>
<dbReference type="UCSC" id="uc001rrj.3">
    <property type="organism name" value="human"/>
</dbReference>
<dbReference type="AGR" id="HGNC:33749"/>
<dbReference type="CTD" id="387856"/>
<dbReference type="GeneCards" id="CCDC184"/>
<dbReference type="HGNC" id="HGNC:33749">
    <property type="gene designation" value="CCDC184"/>
</dbReference>
<dbReference type="HPA" id="ENSG00000177875">
    <property type="expression patterns" value="Tissue enhanced (brain)"/>
</dbReference>
<dbReference type="neXtProt" id="NX_Q52MB2"/>
<dbReference type="OpenTargets" id="ENSG00000177875"/>
<dbReference type="PharmGKB" id="PA162377998"/>
<dbReference type="VEuPathDB" id="HostDB:ENSG00000177875"/>
<dbReference type="eggNOG" id="ENOG502RNYW">
    <property type="taxonomic scope" value="Eukaryota"/>
</dbReference>
<dbReference type="GeneTree" id="ENSGT00390000002978"/>
<dbReference type="HOGENOM" id="CLU_125035_0_0_1"/>
<dbReference type="InParanoid" id="Q52MB2"/>
<dbReference type="OMA" id="KEWGCGS"/>
<dbReference type="OrthoDB" id="9607032at2759"/>
<dbReference type="PAN-GO" id="Q52MB2">
    <property type="GO annotations" value="1 GO annotation based on evolutionary models"/>
</dbReference>
<dbReference type="PhylomeDB" id="Q52MB2"/>
<dbReference type="TreeFam" id="TF337201"/>
<dbReference type="PathwayCommons" id="Q52MB2"/>
<dbReference type="SignaLink" id="Q52MB2"/>
<dbReference type="BioGRID-ORCS" id="387856">
    <property type="hits" value="20 hits in 1116 CRISPR screens"/>
</dbReference>
<dbReference type="GenomeRNAi" id="387856"/>
<dbReference type="Pharos" id="Q52MB2">
    <property type="development level" value="Tdark"/>
</dbReference>
<dbReference type="PRO" id="PR:Q52MB2"/>
<dbReference type="Proteomes" id="UP000005640">
    <property type="component" value="Chromosome 12"/>
</dbReference>
<dbReference type="RNAct" id="Q52MB2">
    <property type="molecule type" value="protein"/>
</dbReference>
<dbReference type="Bgee" id="ENSG00000177875">
    <property type="expression patterns" value="Expressed in cortical plate and 113 other cell types or tissues"/>
</dbReference>
<dbReference type="GO" id="GO:0005737">
    <property type="term" value="C:cytoplasm"/>
    <property type="evidence" value="ECO:0000314"/>
    <property type="project" value="LIFEdb"/>
</dbReference>
<dbReference type="InterPro" id="IPR031458">
    <property type="entry name" value="DUF4677"/>
</dbReference>
<dbReference type="PANTHER" id="PTHR31554">
    <property type="entry name" value="COILED-COIL DOMAIN-CONTAINING PROTEIN 184"/>
    <property type="match status" value="1"/>
</dbReference>
<dbReference type="PANTHER" id="PTHR31554:SF2">
    <property type="entry name" value="COILED-COIL DOMAIN-CONTAINING PROTEIN 184"/>
    <property type="match status" value="1"/>
</dbReference>
<dbReference type="Pfam" id="PF15726">
    <property type="entry name" value="DUF4677"/>
    <property type="match status" value="1"/>
</dbReference>